<keyword id="KW-0106">Calcium</keyword>
<keyword id="KW-0963">Cytoplasm</keyword>
<keyword id="KW-0479">Metal-binding</keyword>
<keyword id="KW-1185">Reference proteome</keyword>
<keyword id="KW-0677">Repeat</keyword>
<name>CAPSL_MOUSE</name>
<organism>
    <name type="scientific">Mus musculus</name>
    <name type="common">Mouse</name>
    <dbReference type="NCBI Taxonomy" id="10090"/>
    <lineage>
        <taxon>Eukaryota</taxon>
        <taxon>Metazoa</taxon>
        <taxon>Chordata</taxon>
        <taxon>Craniata</taxon>
        <taxon>Vertebrata</taxon>
        <taxon>Euteleostomi</taxon>
        <taxon>Mammalia</taxon>
        <taxon>Eutheria</taxon>
        <taxon>Euarchontoglires</taxon>
        <taxon>Glires</taxon>
        <taxon>Rodentia</taxon>
        <taxon>Myomorpha</taxon>
        <taxon>Muroidea</taxon>
        <taxon>Muridae</taxon>
        <taxon>Murinae</taxon>
        <taxon>Mus</taxon>
        <taxon>Mus</taxon>
    </lineage>
</organism>
<protein>
    <recommendedName>
        <fullName>Calcyphosin-like protein</fullName>
    </recommendedName>
</protein>
<feature type="chain" id="PRO_0000264474" description="Calcyphosin-like protein">
    <location>
        <begin position="1"/>
        <end position="208"/>
    </location>
</feature>
<feature type="domain" description="EF-hand 1" evidence="1">
    <location>
        <begin position="39"/>
        <end position="74"/>
    </location>
</feature>
<feature type="domain" description="EF-hand 2" evidence="1">
    <location>
        <begin position="75"/>
        <end position="110"/>
    </location>
</feature>
<feature type="domain" description="EF-hand 3" evidence="1">
    <location>
        <begin position="111"/>
        <end position="146"/>
    </location>
</feature>
<feature type="domain" description="EF-hand 4" evidence="1">
    <location>
        <begin position="154"/>
        <end position="191"/>
    </location>
</feature>
<feature type="binding site" evidence="1">
    <location>
        <position position="52"/>
    </location>
    <ligand>
        <name>Ca(2+)</name>
        <dbReference type="ChEBI" id="CHEBI:29108"/>
        <label>1</label>
    </ligand>
</feature>
<feature type="binding site" evidence="1">
    <location>
        <position position="54"/>
    </location>
    <ligand>
        <name>Ca(2+)</name>
        <dbReference type="ChEBI" id="CHEBI:29108"/>
        <label>1</label>
    </ligand>
</feature>
<feature type="binding site" evidence="1">
    <location>
        <position position="56"/>
    </location>
    <ligand>
        <name>Ca(2+)</name>
        <dbReference type="ChEBI" id="CHEBI:29108"/>
        <label>1</label>
    </ligand>
</feature>
<feature type="binding site" evidence="1">
    <location>
        <position position="58"/>
    </location>
    <ligand>
        <name>Ca(2+)</name>
        <dbReference type="ChEBI" id="CHEBI:29108"/>
        <label>1</label>
    </ligand>
</feature>
<feature type="binding site" evidence="1">
    <location>
        <position position="63"/>
    </location>
    <ligand>
        <name>Ca(2+)</name>
        <dbReference type="ChEBI" id="CHEBI:29108"/>
        <label>1</label>
    </ligand>
</feature>
<feature type="binding site" evidence="1">
    <location>
        <position position="88"/>
    </location>
    <ligand>
        <name>Ca(2+)</name>
        <dbReference type="ChEBI" id="CHEBI:29108"/>
        <label>2</label>
    </ligand>
</feature>
<feature type="binding site" evidence="1">
    <location>
        <position position="90"/>
    </location>
    <ligand>
        <name>Ca(2+)</name>
        <dbReference type="ChEBI" id="CHEBI:29108"/>
        <label>2</label>
    </ligand>
</feature>
<feature type="binding site" evidence="1">
    <location>
        <position position="92"/>
    </location>
    <ligand>
        <name>Ca(2+)</name>
        <dbReference type="ChEBI" id="CHEBI:29108"/>
        <label>2</label>
    </ligand>
</feature>
<feature type="binding site" evidence="1">
    <location>
        <position position="94"/>
    </location>
    <ligand>
        <name>Ca(2+)</name>
        <dbReference type="ChEBI" id="CHEBI:29108"/>
        <label>2</label>
    </ligand>
</feature>
<feature type="binding site" evidence="1">
    <location>
        <position position="99"/>
    </location>
    <ligand>
        <name>Ca(2+)</name>
        <dbReference type="ChEBI" id="CHEBI:29108"/>
        <label>2</label>
    </ligand>
</feature>
<comment type="subcellular location">
    <subcellularLocation>
        <location evidence="2">Cytoplasm</location>
    </subcellularLocation>
</comment>
<comment type="sequence caution" evidence="2">
    <conflict type="erroneous initiation">
        <sequence resource="EMBL-CDS" id="AAH37621"/>
    </conflict>
</comment>
<comment type="sequence caution" evidence="2">
    <conflict type="erroneous initiation">
        <sequence resource="EMBL-CDS" id="BAB24601"/>
    </conflict>
</comment>
<proteinExistence type="evidence at transcript level"/>
<dbReference type="EMBL" id="AK006467">
    <property type="protein sequence ID" value="BAB24601.1"/>
    <property type="status" value="ALT_INIT"/>
    <property type="molecule type" value="mRNA"/>
</dbReference>
<dbReference type="EMBL" id="BC037621">
    <property type="protein sequence ID" value="AAH37621.1"/>
    <property type="status" value="ALT_INIT"/>
    <property type="molecule type" value="mRNA"/>
</dbReference>
<dbReference type="EMBL" id="BC061015">
    <property type="protein sequence ID" value="AAH61015.2"/>
    <property type="molecule type" value="mRNA"/>
</dbReference>
<dbReference type="CCDS" id="CCDS37040.1"/>
<dbReference type="RefSeq" id="NP_083617.2">
    <property type="nucleotide sequence ID" value="NM_029341.2"/>
</dbReference>
<dbReference type="SMR" id="Q6P8Y1"/>
<dbReference type="STRING" id="10090.ENSMUSP00000035663"/>
<dbReference type="iPTMnet" id="Q6P8Y1"/>
<dbReference type="PhosphoSitePlus" id="Q6P8Y1"/>
<dbReference type="PaxDb" id="10090-ENSMUSP00000035663"/>
<dbReference type="ProteomicsDB" id="265331"/>
<dbReference type="Antibodypedia" id="43514">
    <property type="antibodies" value="41 antibodies from 18 providers"/>
</dbReference>
<dbReference type="DNASU" id="75568"/>
<dbReference type="Ensembl" id="ENSMUST00000042360.5">
    <property type="protein sequence ID" value="ENSMUSP00000035663.4"/>
    <property type="gene ID" value="ENSMUSG00000039676.5"/>
</dbReference>
<dbReference type="GeneID" id="75568"/>
<dbReference type="KEGG" id="mmu:75568"/>
<dbReference type="UCSC" id="uc007vfn.1">
    <property type="organism name" value="mouse"/>
</dbReference>
<dbReference type="AGR" id="MGI:1922818"/>
<dbReference type="CTD" id="133690"/>
<dbReference type="MGI" id="MGI:1922818">
    <property type="gene designation" value="Capsl"/>
</dbReference>
<dbReference type="VEuPathDB" id="HostDB:ENSMUSG00000039676"/>
<dbReference type="eggNOG" id="KOG0032">
    <property type="taxonomic scope" value="Eukaryota"/>
</dbReference>
<dbReference type="GeneTree" id="ENSGT00940000156466"/>
<dbReference type="HOGENOM" id="CLU_036726_1_0_1"/>
<dbReference type="InParanoid" id="Q6P8Y1"/>
<dbReference type="OMA" id="MKGVYHA"/>
<dbReference type="OrthoDB" id="444540at2759"/>
<dbReference type="PhylomeDB" id="Q6P8Y1"/>
<dbReference type="TreeFam" id="TF318191"/>
<dbReference type="BioGRID-ORCS" id="75568">
    <property type="hits" value="0 hits in 76 CRISPR screens"/>
</dbReference>
<dbReference type="ChiTaRS" id="Capsl">
    <property type="organism name" value="mouse"/>
</dbReference>
<dbReference type="PRO" id="PR:Q6P8Y1"/>
<dbReference type="Proteomes" id="UP000000589">
    <property type="component" value="Chromosome 15"/>
</dbReference>
<dbReference type="RNAct" id="Q6P8Y1">
    <property type="molecule type" value="protein"/>
</dbReference>
<dbReference type="Bgee" id="ENSMUSG00000039676">
    <property type="expression patterns" value="Expressed in choroid plexus epithelium and 89 other cell types or tissues"/>
</dbReference>
<dbReference type="ExpressionAtlas" id="Q6P8Y1">
    <property type="expression patterns" value="baseline and differential"/>
</dbReference>
<dbReference type="GO" id="GO:0005737">
    <property type="term" value="C:cytoplasm"/>
    <property type="evidence" value="ECO:0007669"/>
    <property type="project" value="UniProtKB-SubCell"/>
</dbReference>
<dbReference type="GO" id="GO:0005509">
    <property type="term" value="F:calcium ion binding"/>
    <property type="evidence" value="ECO:0007669"/>
    <property type="project" value="InterPro"/>
</dbReference>
<dbReference type="Gene3D" id="1.10.238.10">
    <property type="entry name" value="EF-hand"/>
    <property type="match status" value="2"/>
</dbReference>
<dbReference type="InterPro" id="IPR051581">
    <property type="entry name" value="Ca-bind_SignalingProt"/>
</dbReference>
<dbReference type="InterPro" id="IPR011992">
    <property type="entry name" value="EF-hand-dom_pair"/>
</dbReference>
<dbReference type="InterPro" id="IPR018247">
    <property type="entry name" value="EF_Hand_1_Ca_BS"/>
</dbReference>
<dbReference type="InterPro" id="IPR002048">
    <property type="entry name" value="EF_hand_dom"/>
</dbReference>
<dbReference type="PANTHER" id="PTHR34524">
    <property type="entry name" value="CALCYPHOSIN"/>
    <property type="match status" value="1"/>
</dbReference>
<dbReference type="PANTHER" id="PTHR34524:SF5">
    <property type="entry name" value="CALCYPHOSIN-LIKE PROTEIN"/>
    <property type="match status" value="1"/>
</dbReference>
<dbReference type="Pfam" id="PF13499">
    <property type="entry name" value="EF-hand_7"/>
    <property type="match status" value="2"/>
</dbReference>
<dbReference type="PRINTS" id="PR00450">
    <property type="entry name" value="RECOVERIN"/>
</dbReference>
<dbReference type="SMART" id="SM00054">
    <property type="entry name" value="EFh"/>
    <property type="match status" value="4"/>
</dbReference>
<dbReference type="SUPFAM" id="SSF47473">
    <property type="entry name" value="EF-hand"/>
    <property type="match status" value="1"/>
</dbReference>
<dbReference type="PROSITE" id="PS00018">
    <property type="entry name" value="EF_HAND_1"/>
    <property type="match status" value="2"/>
</dbReference>
<dbReference type="PROSITE" id="PS50222">
    <property type="entry name" value="EF_HAND_2"/>
    <property type="match status" value="4"/>
</dbReference>
<reference key="1">
    <citation type="journal article" date="2005" name="Science">
        <title>The transcriptional landscape of the mammalian genome.</title>
        <authorList>
            <person name="Carninci P."/>
            <person name="Kasukawa T."/>
            <person name="Katayama S."/>
            <person name="Gough J."/>
            <person name="Frith M.C."/>
            <person name="Maeda N."/>
            <person name="Oyama R."/>
            <person name="Ravasi T."/>
            <person name="Lenhard B."/>
            <person name="Wells C."/>
            <person name="Kodzius R."/>
            <person name="Shimokawa K."/>
            <person name="Bajic V.B."/>
            <person name="Brenner S.E."/>
            <person name="Batalov S."/>
            <person name="Forrest A.R."/>
            <person name="Zavolan M."/>
            <person name="Davis M.J."/>
            <person name="Wilming L.G."/>
            <person name="Aidinis V."/>
            <person name="Allen J.E."/>
            <person name="Ambesi-Impiombato A."/>
            <person name="Apweiler R."/>
            <person name="Aturaliya R.N."/>
            <person name="Bailey T.L."/>
            <person name="Bansal M."/>
            <person name="Baxter L."/>
            <person name="Beisel K.W."/>
            <person name="Bersano T."/>
            <person name="Bono H."/>
            <person name="Chalk A.M."/>
            <person name="Chiu K.P."/>
            <person name="Choudhary V."/>
            <person name="Christoffels A."/>
            <person name="Clutterbuck D.R."/>
            <person name="Crowe M.L."/>
            <person name="Dalla E."/>
            <person name="Dalrymple B.P."/>
            <person name="de Bono B."/>
            <person name="Della Gatta G."/>
            <person name="di Bernardo D."/>
            <person name="Down T."/>
            <person name="Engstrom P."/>
            <person name="Fagiolini M."/>
            <person name="Faulkner G."/>
            <person name="Fletcher C.F."/>
            <person name="Fukushima T."/>
            <person name="Furuno M."/>
            <person name="Futaki S."/>
            <person name="Gariboldi M."/>
            <person name="Georgii-Hemming P."/>
            <person name="Gingeras T.R."/>
            <person name="Gojobori T."/>
            <person name="Green R.E."/>
            <person name="Gustincich S."/>
            <person name="Harbers M."/>
            <person name="Hayashi Y."/>
            <person name="Hensch T.K."/>
            <person name="Hirokawa N."/>
            <person name="Hill D."/>
            <person name="Huminiecki L."/>
            <person name="Iacono M."/>
            <person name="Ikeo K."/>
            <person name="Iwama A."/>
            <person name="Ishikawa T."/>
            <person name="Jakt M."/>
            <person name="Kanapin A."/>
            <person name="Katoh M."/>
            <person name="Kawasawa Y."/>
            <person name="Kelso J."/>
            <person name="Kitamura H."/>
            <person name="Kitano H."/>
            <person name="Kollias G."/>
            <person name="Krishnan S.P."/>
            <person name="Kruger A."/>
            <person name="Kummerfeld S.K."/>
            <person name="Kurochkin I.V."/>
            <person name="Lareau L.F."/>
            <person name="Lazarevic D."/>
            <person name="Lipovich L."/>
            <person name="Liu J."/>
            <person name="Liuni S."/>
            <person name="McWilliam S."/>
            <person name="Madan Babu M."/>
            <person name="Madera M."/>
            <person name="Marchionni L."/>
            <person name="Matsuda H."/>
            <person name="Matsuzawa S."/>
            <person name="Miki H."/>
            <person name="Mignone F."/>
            <person name="Miyake S."/>
            <person name="Morris K."/>
            <person name="Mottagui-Tabar S."/>
            <person name="Mulder N."/>
            <person name="Nakano N."/>
            <person name="Nakauchi H."/>
            <person name="Ng P."/>
            <person name="Nilsson R."/>
            <person name="Nishiguchi S."/>
            <person name="Nishikawa S."/>
            <person name="Nori F."/>
            <person name="Ohara O."/>
            <person name="Okazaki Y."/>
            <person name="Orlando V."/>
            <person name="Pang K.C."/>
            <person name="Pavan W.J."/>
            <person name="Pavesi G."/>
            <person name="Pesole G."/>
            <person name="Petrovsky N."/>
            <person name="Piazza S."/>
            <person name="Reed J."/>
            <person name="Reid J.F."/>
            <person name="Ring B.Z."/>
            <person name="Ringwald M."/>
            <person name="Rost B."/>
            <person name="Ruan Y."/>
            <person name="Salzberg S.L."/>
            <person name="Sandelin A."/>
            <person name="Schneider C."/>
            <person name="Schoenbach C."/>
            <person name="Sekiguchi K."/>
            <person name="Semple C.A."/>
            <person name="Seno S."/>
            <person name="Sessa L."/>
            <person name="Sheng Y."/>
            <person name="Shibata Y."/>
            <person name="Shimada H."/>
            <person name="Shimada K."/>
            <person name="Silva D."/>
            <person name="Sinclair B."/>
            <person name="Sperling S."/>
            <person name="Stupka E."/>
            <person name="Sugiura K."/>
            <person name="Sultana R."/>
            <person name="Takenaka Y."/>
            <person name="Taki K."/>
            <person name="Tammoja K."/>
            <person name="Tan S.L."/>
            <person name="Tang S."/>
            <person name="Taylor M.S."/>
            <person name="Tegner J."/>
            <person name="Teichmann S.A."/>
            <person name="Ueda H.R."/>
            <person name="van Nimwegen E."/>
            <person name="Verardo R."/>
            <person name="Wei C.L."/>
            <person name="Yagi K."/>
            <person name="Yamanishi H."/>
            <person name="Zabarovsky E."/>
            <person name="Zhu S."/>
            <person name="Zimmer A."/>
            <person name="Hide W."/>
            <person name="Bult C."/>
            <person name="Grimmond S.M."/>
            <person name="Teasdale R.D."/>
            <person name="Liu E.T."/>
            <person name="Brusic V."/>
            <person name="Quackenbush J."/>
            <person name="Wahlestedt C."/>
            <person name="Mattick J.S."/>
            <person name="Hume D.A."/>
            <person name="Kai C."/>
            <person name="Sasaki D."/>
            <person name="Tomaru Y."/>
            <person name="Fukuda S."/>
            <person name="Kanamori-Katayama M."/>
            <person name="Suzuki M."/>
            <person name="Aoki J."/>
            <person name="Arakawa T."/>
            <person name="Iida J."/>
            <person name="Imamura K."/>
            <person name="Itoh M."/>
            <person name="Kato T."/>
            <person name="Kawaji H."/>
            <person name="Kawagashira N."/>
            <person name="Kawashima T."/>
            <person name="Kojima M."/>
            <person name="Kondo S."/>
            <person name="Konno H."/>
            <person name="Nakano K."/>
            <person name="Ninomiya N."/>
            <person name="Nishio T."/>
            <person name="Okada M."/>
            <person name="Plessy C."/>
            <person name="Shibata K."/>
            <person name="Shiraki T."/>
            <person name="Suzuki S."/>
            <person name="Tagami M."/>
            <person name="Waki K."/>
            <person name="Watahiki A."/>
            <person name="Okamura-Oho Y."/>
            <person name="Suzuki H."/>
            <person name="Kawai J."/>
            <person name="Hayashizaki Y."/>
        </authorList>
    </citation>
    <scope>NUCLEOTIDE SEQUENCE [LARGE SCALE MRNA]</scope>
    <source>
        <strain>C57BL/6J</strain>
        <tissue>Testis</tissue>
    </source>
</reference>
<reference key="2">
    <citation type="journal article" date="2004" name="Genome Res.">
        <title>The status, quality, and expansion of the NIH full-length cDNA project: the Mammalian Gene Collection (MGC).</title>
        <authorList>
            <consortium name="The MGC Project Team"/>
        </authorList>
    </citation>
    <scope>NUCLEOTIDE SEQUENCE [LARGE SCALE MRNA]</scope>
    <source>
        <strain>FVB/N-3</strain>
        <tissue>Heart</tissue>
        <tissue>Lung</tissue>
        <tissue>Mammary gland</tissue>
    </source>
</reference>
<gene>
    <name type="primary">Capsl</name>
</gene>
<accession>Q6P8Y1</accession>
<accession>Q5U5X2</accession>
<accession>Q9D9U6</accession>
<evidence type="ECO:0000255" key="1">
    <source>
        <dbReference type="PROSITE-ProRule" id="PRU00448"/>
    </source>
</evidence>
<evidence type="ECO:0000305" key="2"/>
<sequence length="208" mass="24115">MAGTARHDREMAIQSKKKLSTATDPIERLRLQCLARGSAGIKGLGRVFRIMDDNNNRTLDFKEFLKGLNDYAVVMEKEEAEELFQRFDRDGSGTIDFNEFLLTLRPPMSRARKEVIMKAFRKLDKTGDGVITIEDLREVYNAKHHPKYQNGEWTEEQVFRKFLDNFDSPYDKDGLVTPEEFMNYYAGVSASIDTDVYFIIMMTTAWKL</sequence>